<keyword id="KW-0210">Decarboxylase</keyword>
<keyword id="KW-0456">Lyase</keyword>
<keyword id="KW-0665">Pyrimidine biosynthesis</keyword>
<reference key="1">
    <citation type="journal article" date="2009" name="J. Bacteriol.">
        <title>Genomic sequencing reveals regulatory mutations and recombinational events in the widely used MC4100 lineage of Escherichia coli K-12.</title>
        <authorList>
            <person name="Ferenci T."/>
            <person name="Zhou Z."/>
            <person name="Betteridge T."/>
            <person name="Ren Y."/>
            <person name="Liu Y."/>
            <person name="Feng L."/>
            <person name="Reeves P.R."/>
            <person name="Wang L."/>
        </authorList>
    </citation>
    <scope>NUCLEOTIDE SEQUENCE [LARGE SCALE GENOMIC DNA]</scope>
    <source>
        <strain>K12 / MC4100 / BW2952</strain>
    </source>
</reference>
<comment type="function">
    <text evidence="1">Catalyzes the decarboxylation of orotidine 5'-monophosphate (OMP) to uridine 5'-monophosphate (UMP).</text>
</comment>
<comment type="catalytic activity">
    <reaction evidence="1">
        <text>orotidine 5'-phosphate + H(+) = UMP + CO2</text>
        <dbReference type="Rhea" id="RHEA:11596"/>
        <dbReference type="ChEBI" id="CHEBI:15378"/>
        <dbReference type="ChEBI" id="CHEBI:16526"/>
        <dbReference type="ChEBI" id="CHEBI:57538"/>
        <dbReference type="ChEBI" id="CHEBI:57865"/>
        <dbReference type="EC" id="4.1.1.23"/>
    </reaction>
</comment>
<comment type="pathway">
    <text evidence="1">Pyrimidine metabolism; UMP biosynthesis via de novo pathway; UMP from orotate: step 2/2.</text>
</comment>
<comment type="subunit">
    <text evidence="1">Homodimer.</text>
</comment>
<comment type="similarity">
    <text evidence="1">Belongs to the OMP decarboxylase family. Type 1 subfamily.</text>
</comment>
<feature type="chain" id="PRO_1000213819" description="Orotidine 5'-phosphate decarboxylase">
    <location>
        <begin position="1"/>
        <end position="245"/>
    </location>
</feature>
<feature type="active site" description="Proton donor" evidence="1">
    <location>
        <position position="73"/>
    </location>
</feature>
<feature type="binding site" evidence="1">
    <location>
        <position position="22"/>
    </location>
    <ligand>
        <name>substrate</name>
    </ligand>
</feature>
<feature type="binding site" evidence="1">
    <location>
        <position position="44"/>
    </location>
    <ligand>
        <name>substrate</name>
    </ligand>
</feature>
<feature type="binding site" evidence="1">
    <location>
        <begin position="71"/>
        <end position="80"/>
    </location>
    <ligand>
        <name>substrate</name>
    </ligand>
</feature>
<feature type="binding site" evidence="1">
    <location>
        <position position="131"/>
    </location>
    <ligand>
        <name>substrate</name>
    </ligand>
</feature>
<feature type="binding site" evidence="1">
    <location>
        <position position="192"/>
    </location>
    <ligand>
        <name>substrate</name>
    </ligand>
</feature>
<feature type="binding site" evidence="1">
    <location>
        <position position="201"/>
    </location>
    <ligand>
        <name>substrate</name>
    </ligand>
</feature>
<feature type="binding site" evidence="1">
    <location>
        <position position="221"/>
    </location>
    <ligand>
        <name>substrate</name>
    </ligand>
</feature>
<feature type="binding site" evidence="1">
    <location>
        <position position="222"/>
    </location>
    <ligand>
        <name>substrate</name>
    </ligand>
</feature>
<evidence type="ECO:0000255" key="1">
    <source>
        <dbReference type="HAMAP-Rule" id="MF_01200"/>
    </source>
</evidence>
<protein>
    <recommendedName>
        <fullName evidence="1">Orotidine 5'-phosphate decarboxylase</fullName>
        <ecNumber evidence="1">4.1.1.23</ecNumber>
    </recommendedName>
    <alternativeName>
        <fullName evidence="1">OMP decarboxylase</fullName>
        <shortName evidence="1">OMPDCase</shortName>
        <shortName evidence="1">OMPdecase</shortName>
    </alternativeName>
</protein>
<gene>
    <name evidence="1" type="primary">pyrF</name>
    <name type="ordered locus">BWG_1112</name>
</gene>
<organism>
    <name type="scientific">Escherichia coli (strain K12 / MC4100 / BW2952)</name>
    <dbReference type="NCBI Taxonomy" id="595496"/>
    <lineage>
        <taxon>Bacteria</taxon>
        <taxon>Pseudomonadati</taxon>
        <taxon>Pseudomonadota</taxon>
        <taxon>Gammaproteobacteria</taxon>
        <taxon>Enterobacterales</taxon>
        <taxon>Enterobacteriaceae</taxon>
        <taxon>Escherichia</taxon>
    </lineage>
</organism>
<accession>C4ZTX6</accession>
<dbReference type="EC" id="4.1.1.23" evidence="1"/>
<dbReference type="EMBL" id="CP001396">
    <property type="protein sequence ID" value="ACR63940.1"/>
    <property type="molecule type" value="Genomic_DNA"/>
</dbReference>
<dbReference type="RefSeq" id="WP_000176270.1">
    <property type="nucleotide sequence ID" value="NC_012759.1"/>
</dbReference>
<dbReference type="SMR" id="C4ZTX6"/>
<dbReference type="KEGG" id="ebw:BWG_1112"/>
<dbReference type="HOGENOM" id="CLU_067069_0_0_6"/>
<dbReference type="UniPathway" id="UPA00070">
    <property type="reaction ID" value="UER00120"/>
</dbReference>
<dbReference type="GO" id="GO:0005829">
    <property type="term" value="C:cytosol"/>
    <property type="evidence" value="ECO:0007669"/>
    <property type="project" value="TreeGrafter"/>
</dbReference>
<dbReference type="GO" id="GO:0004590">
    <property type="term" value="F:orotidine-5'-phosphate decarboxylase activity"/>
    <property type="evidence" value="ECO:0007669"/>
    <property type="project" value="UniProtKB-UniRule"/>
</dbReference>
<dbReference type="GO" id="GO:0006207">
    <property type="term" value="P:'de novo' pyrimidine nucleobase biosynthetic process"/>
    <property type="evidence" value="ECO:0007669"/>
    <property type="project" value="InterPro"/>
</dbReference>
<dbReference type="GO" id="GO:0044205">
    <property type="term" value="P:'de novo' UMP biosynthetic process"/>
    <property type="evidence" value="ECO:0007669"/>
    <property type="project" value="UniProtKB-UniRule"/>
</dbReference>
<dbReference type="CDD" id="cd04725">
    <property type="entry name" value="OMP_decarboxylase_like"/>
    <property type="match status" value="1"/>
</dbReference>
<dbReference type="FunFam" id="3.20.20.70:FF:000015">
    <property type="entry name" value="Orotidine 5'-phosphate decarboxylase"/>
    <property type="match status" value="1"/>
</dbReference>
<dbReference type="Gene3D" id="3.20.20.70">
    <property type="entry name" value="Aldolase class I"/>
    <property type="match status" value="1"/>
</dbReference>
<dbReference type="HAMAP" id="MF_01200_B">
    <property type="entry name" value="OMPdecase_type1_B"/>
    <property type="match status" value="1"/>
</dbReference>
<dbReference type="InterPro" id="IPR013785">
    <property type="entry name" value="Aldolase_TIM"/>
</dbReference>
<dbReference type="InterPro" id="IPR014732">
    <property type="entry name" value="OMPdecase"/>
</dbReference>
<dbReference type="InterPro" id="IPR018089">
    <property type="entry name" value="OMPdecase_AS"/>
</dbReference>
<dbReference type="InterPro" id="IPR047596">
    <property type="entry name" value="OMPdecase_bac"/>
</dbReference>
<dbReference type="InterPro" id="IPR001754">
    <property type="entry name" value="OMPdeCOase_dom"/>
</dbReference>
<dbReference type="InterPro" id="IPR011060">
    <property type="entry name" value="RibuloseP-bd_barrel"/>
</dbReference>
<dbReference type="NCBIfam" id="NF001273">
    <property type="entry name" value="PRK00230.1"/>
    <property type="match status" value="1"/>
</dbReference>
<dbReference type="NCBIfam" id="TIGR01740">
    <property type="entry name" value="pyrF"/>
    <property type="match status" value="1"/>
</dbReference>
<dbReference type="PANTHER" id="PTHR32119">
    <property type="entry name" value="OROTIDINE 5'-PHOSPHATE DECARBOXYLASE"/>
    <property type="match status" value="1"/>
</dbReference>
<dbReference type="PANTHER" id="PTHR32119:SF2">
    <property type="entry name" value="OROTIDINE 5'-PHOSPHATE DECARBOXYLASE"/>
    <property type="match status" value="1"/>
</dbReference>
<dbReference type="Pfam" id="PF00215">
    <property type="entry name" value="OMPdecase"/>
    <property type="match status" value="1"/>
</dbReference>
<dbReference type="SMART" id="SM00934">
    <property type="entry name" value="OMPdecase"/>
    <property type="match status" value="1"/>
</dbReference>
<dbReference type="SUPFAM" id="SSF51366">
    <property type="entry name" value="Ribulose-phoshate binding barrel"/>
    <property type="match status" value="1"/>
</dbReference>
<dbReference type="PROSITE" id="PS00156">
    <property type="entry name" value="OMPDECASE"/>
    <property type="match status" value="1"/>
</dbReference>
<name>PYRF_ECOBW</name>
<sequence length="245" mass="26350">MTLTASSSSRAVTNSPVVVALDYHNRDDALAFVDKIDPRDCRLKVGKEMFTLFGPQFVRELQQRGFDIFLDLKFHDIPNTAAHAVAAAADLGVWMVNVHASGGARMMTAAREALVPFGKDAPLLIAVTVLTSMEASDLVDLGMTLSPADYAERLAALTQKCGLDGVVCSAQEAVRFKQVFGQEFKLVTPGIRPQGSEAGDQRRIMTPEQALSAGVDYMVIGRPVTQSVDPAQTLKAINASLQRSA</sequence>
<proteinExistence type="inferred from homology"/>